<proteinExistence type="inferred from homology"/>
<sequence>MKIVVDENMPYVEPLFGDLGEIIPVNGRTLTPEQVQDADVLLVRSVTRVNAALLEANQKLKFVGSATIGTDHVDLAYLATRGIVFSNAPGCNATAVGEFAFIAMLELAARFNSPLRGKVVGIVGAGNTGSATAKCLEAFGIKVLLNDPIKEAEGDPRDFVSLETLLQEADIISLHVPITRTGEHKTLHLFDEARLMSLKANIWLINCCRGDVIDNQALIKVKQQRDDLKLVLDVWEGEPNPMPELVPFAEFATPHIAGYSLEGKARGTFMLYQKLCELLAIPATKGLSDLLPRFNIKAVELEQLPDEKALLQLARFVYDLRDDDAVFRNCFAKENGFDIMRKNHKHRREFSALALAYRGQSEVDWLSNLGFSGVGR</sequence>
<comment type="function">
    <text evidence="1">Catalyzes the oxidation of erythronate-4-phosphate to 3-hydroxy-2-oxo-4-phosphonooxybutanoate.</text>
</comment>
<comment type="catalytic activity">
    <reaction evidence="1">
        <text>4-phospho-D-erythronate + NAD(+) = (R)-3-hydroxy-2-oxo-4-phosphooxybutanoate + NADH + H(+)</text>
        <dbReference type="Rhea" id="RHEA:18829"/>
        <dbReference type="ChEBI" id="CHEBI:15378"/>
        <dbReference type="ChEBI" id="CHEBI:57540"/>
        <dbReference type="ChEBI" id="CHEBI:57945"/>
        <dbReference type="ChEBI" id="CHEBI:58538"/>
        <dbReference type="ChEBI" id="CHEBI:58766"/>
        <dbReference type="EC" id="1.1.1.290"/>
    </reaction>
</comment>
<comment type="pathway">
    <text evidence="1">Cofactor biosynthesis; pyridoxine 5'-phosphate biosynthesis; pyridoxine 5'-phosphate from D-erythrose 4-phosphate: step 2/5.</text>
</comment>
<comment type="subunit">
    <text evidence="1">Homodimer.</text>
</comment>
<comment type="subcellular location">
    <subcellularLocation>
        <location evidence="1">Cytoplasm</location>
    </subcellularLocation>
</comment>
<comment type="similarity">
    <text evidence="1">Belongs to the D-isomer specific 2-hydroxyacid dehydrogenase family. PdxB subfamily.</text>
</comment>
<keyword id="KW-0963">Cytoplasm</keyword>
<keyword id="KW-0520">NAD</keyword>
<keyword id="KW-0560">Oxidoreductase</keyword>
<keyword id="KW-0664">Pyridoxine biosynthesis</keyword>
<keyword id="KW-1185">Reference proteome</keyword>
<name>PDXB_SHEON</name>
<dbReference type="EC" id="1.1.1.290" evidence="1"/>
<dbReference type="EMBL" id="AE014299">
    <property type="protein sequence ID" value="AAN56079.1"/>
    <property type="molecule type" value="Genomic_DNA"/>
</dbReference>
<dbReference type="RefSeq" id="NP_718635.1">
    <property type="nucleotide sequence ID" value="NC_004347.2"/>
</dbReference>
<dbReference type="RefSeq" id="WP_011072969.1">
    <property type="nucleotide sequence ID" value="NC_004347.2"/>
</dbReference>
<dbReference type="SMR" id="Q8ECR2"/>
<dbReference type="STRING" id="211586.SO_3071"/>
<dbReference type="PaxDb" id="211586-SO_3071"/>
<dbReference type="KEGG" id="son:SO_3071"/>
<dbReference type="PATRIC" id="fig|211586.12.peg.2967"/>
<dbReference type="eggNOG" id="COG0111">
    <property type="taxonomic scope" value="Bacteria"/>
</dbReference>
<dbReference type="HOGENOM" id="CLU_019796_4_0_6"/>
<dbReference type="OrthoDB" id="9770208at2"/>
<dbReference type="PhylomeDB" id="Q8ECR2"/>
<dbReference type="BioCyc" id="SONE211586:G1GMP-2843-MONOMER"/>
<dbReference type="UniPathway" id="UPA00244">
    <property type="reaction ID" value="UER00310"/>
</dbReference>
<dbReference type="Proteomes" id="UP000008186">
    <property type="component" value="Chromosome"/>
</dbReference>
<dbReference type="GO" id="GO:0005829">
    <property type="term" value="C:cytosol"/>
    <property type="evidence" value="ECO:0000318"/>
    <property type="project" value="GO_Central"/>
</dbReference>
<dbReference type="GO" id="GO:0033711">
    <property type="term" value="F:4-phosphoerythronate dehydrogenase activity"/>
    <property type="evidence" value="ECO:0000318"/>
    <property type="project" value="GO_Central"/>
</dbReference>
<dbReference type="GO" id="GO:0051287">
    <property type="term" value="F:NAD binding"/>
    <property type="evidence" value="ECO:0007669"/>
    <property type="project" value="InterPro"/>
</dbReference>
<dbReference type="GO" id="GO:0046983">
    <property type="term" value="F:protein dimerization activity"/>
    <property type="evidence" value="ECO:0007669"/>
    <property type="project" value="InterPro"/>
</dbReference>
<dbReference type="GO" id="GO:0036001">
    <property type="term" value="P:'de novo' pyridoxal 5'-phosphate biosynthetic process"/>
    <property type="evidence" value="ECO:0000318"/>
    <property type="project" value="GO_Central"/>
</dbReference>
<dbReference type="GO" id="GO:0008615">
    <property type="term" value="P:pyridoxine biosynthetic process"/>
    <property type="evidence" value="ECO:0000318"/>
    <property type="project" value="GO_Central"/>
</dbReference>
<dbReference type="CDD" id="cd12158">
    <property type="entry name" value="ErythrP_dh"/>
    <property type="match status" value="1"/>
</dbReference>
<dbReference type="Gene3D" id="3.30.1370.170">
    <property type="match status" value="1"/>
</dbReference>
<dbReference type="Gene3D" id="3.40.50.720">
    <property type="entry name" value="NAD(P)-binding Rossmann-like Domain"/>
    <property type="match status" value="2"/>
</dbReference>
<dbReference type="HAMAP" id="MF_01825">
    <property type="entry name" value="PdxB"/>
    <property type="match status" value="1"/>
</dbReference>
<dbReference type="InterPro" id="IPR006139">
    <property type="entry name" value="D-isomer_2_OHA_DH_cat_dom"/>
</dbReference>
<dbReference type="InterPro" id="IPR029753">
    <property type="entry name" value="D-isomer_DH_CS"/>
</dbReference>
<dbReference type="InterPro" id="IPR006140">
    <property type="entry name" value="D-isomer_DH_NAD-bd"/>
</dbReference>
<dbReference type="InterPro" id="IPR020921">
    <property type="entry name" value="Erythronate-4-P_DHase"/>
</dbReference>
<dbReference type="InterPro" id="IPR024531">
    <property type="entry name" value="Erythronate-4-P_DHase_dimer"/>
</dbReference>
<dbReference type="InterPro" id="IPR036291">
    <property type="entry name" value="NAD(P)-bd_dom_sf"/>
</dbReference>
<dbReference type="InterPro" id="IPR038251">
    <property type="entry name" value="PdxB_dimer_sf"/>
</dbReference>
<dbReference type="PANTHER" id="PTHR42938">
    <property type="entry name" value="FORMATE DEHYDROGENASE 1"/>
    <property type="match status" value="1"/>
</dbReference>
<dbReference type="PANTHER" id="PTHR42938:SF9">
    <property type="entry name" value="FORMATE DEHYDROGENASE 1"/>
    <property type="match status" value="1"/>
</dbReference>
<dbReference type="Pfam" id="PF00389">
    <property type="entry name" value="2-Hacid_dh"/>
    <property type="match status" value="1"/>
</dbReference>
<dbReference type="Pfam" id="PF02826">
    <property type="entry name" value="2-Hacid_dh_C"/>
    <property type="match status" value="1"/>
</dbReference>
<dbReference type="Pfam" id="PF11890">
    <property type="entry name" value="DUF3410"/>
    <property type="match status" value="1"/>
</dbReference>
<dbReference type="SUPFAM" id="SSF52283">
    <property type="entry name" value="Formate/glycerate dehydrogenase catalytic domain-like"/>
    <property type="match status" value="1"/>
</dbReference>
<dbReference type="SUPFAM" id="SSF51735">
    <property type="entry name" value="NAD(P)-binding Rossmann-fold domains"/>
    <property type="match status" value="1"/>
</dbReference>
<dbReference type="PROSITE" id="PS00671">
    <property type="entry name" value="D_2_HYDROXYACID_DH_3"/>
    <property type="match status" value="1"/>
</dbReference>
<gene>
    <name evidence="1" type="primary">pdxB</name>
    <name type="ordered locus">SO_3071</name>
</gene>
<accession>Q8ECR2</accession>
<organism>
    <name type="scientific">Shewanella oneidensis (strain ATCC 700550 / JCM 31522 / CIP 106686 / LMG 19005 / NCIMB 14063 / MR-1)</name>
    <dbReference type="NCBI Taxonomy" id="211586"/>
    <lineage>
        <taxon>Bacteria</taxon>
        <taxon>Pseudomonadati</taxon>
        <taxon>Pseudomonadota</taxon>
        <taxon>Gammaproteobacteria</taxon>
        <taxon>Alteromonadales</taxon>
        <taxon>Shewanellaceae</taxon>
        <taxon>Shewanella</taxon>
    </lineage>
</organism>
<feature type="chain" id="PRO_0000075987" description="Erythronate-4-phosphate dehydrogenase">
    <location>
        <begin position="1"/>
        <end position="376"/>
    </location>
</feature>
<feature type="active site" evidence="1">
    <location>
        <position position="209"/>
    </location>
</feature>
<feature type="active site" evidence="1">
    <location>
        <position position="238"/>
    </location>
</feature>
<feature type="active site" description="Proton donor" evidence="1">
    <location>
        <position position="255"/>
    </location>
</feature>
<feature type="binding site" evidence="1">
    <location>
        <position position="45"/>
    </location>
    <ligand>
        <name>substrate</name>
    </ligand>
</feature>
<feature type="binding site" evidence="1">
    <location>
        <position position="67"/>
    </location>
    <ligand>
        <name>substrate</name>
    </ligand>
</feature>
<feature type="binding site" evidence="1">
    <location>
        <position position="147"/>
    </location>
    <ligand>
        <name>NAD(+)</name>
        <dbReference type="ChEBI" id="CHEBI:57540"/>
    </ligand>
</feature>
<feature type="binding site" evidence="1">
    <location>
        <position position="233"/>
    </location>
    <ligand>
        <name>NAD(+)</name>
        <dbReference type="ChEBI" id="CHEBI:57540"/>
    </ligand>
</feature>
<feature type="binding site" evidence="1">
    <location>
        <position position="258"/>
    </location>
    <ligand>
        <name>NAD(+)</name>
        <dbReference type="ChEBI" id="CHEBI:57540"/>
    </ligand>
</feature>
<feature type="binding site" evidence="1">
    <location>
        <position position="259"/>
    </location>
    <ligand>
        <name>substrate</name>
    </ligand>
</feature>
<evidence type="ECO:0000255" key="1">
    <source>
        <dbReference type="HAMAP-Rule" id="MF_01825"/>
    </source>
</evidence>
<protein>
    <recommendedName>
        <fullName evidence="1">Erythronate-4-phosphate dehydrogenase</fullName>
        <ecNumber evidence="1">1.1.1.290</ecNumber>
    </recommendedName>
</protein>
<reference key="1">
    <citation type="journal article" date="2002" name="Nat. Biotechnol.">
        <title>Genome sequence of the dissimilatory metal ion-reducing bacterium Shewanella oneidensis.</title>
        <authorList>
            <person name="Heidelberg J.F."/>
            <person name="Paulsen I.T."/>
            <person name="Nelson K.E."/>
            <person name="Gaidos E.J."/>
            <person name="Nelson W.C."/>
            <person name="Read T.D."/>
            <person name="Eisen J.A."/>
            <person name="Seshadri R."/>
            <person name="Ward N.L."/>
            <person name="Methe B.A."/>
            <person name="Clayton R.A."/>
            <person name="Meyer T."/>
            <person name="Tsapin A."/>
            <person name="Scott J."/>
            <person name="Beanan M.J."/>
            <person name="Brinkac L.M."/>
            <person name="Daugherty S.C."/>
            <person name="DeBoy R.T."/>
            <person name="Dodson R.J."/>
            <person name="Durkin A.S."/>
            <person name="Haft D.H."/>
            <person name="Kolonay J.F."/>
            <person name="Madupu R."/>
            <person name="Peterson J.D."/>
            <person name="Umayam L.A."/>
            <person name="White O."/>
            <person name="Wolf A.M."/>
            <person name="Vamathevan J.J."/>
            <person name="Weidman J.F."/>
            <person name="Impraim M."/>
            <person name="Lee K."/>
            <person name="Berry K.J."/>
            <person name="Lee C."/>
            <person name="Mueller J."/>
            <person name="Khouri H.M."/>
            <person name="Gill J."/>
            <person name="Utterback T.R."/>
            <person name="McDonald L.A."/>
            <person name="Feldblyum T.V."/>
            <person name="Smith H.O."/>
            <person name="Venter J.C."/>
            <person name="Nealson K.H."/>
            <person name="Fraser C.M."/>
        </authorList>
    </citation>
    <scope>NUCLEOTIDE SEQUENCE [LARGE SCALE GENOMIC DNA]</scope>
    <source>
        <strain>ATCC 700550 / JCM 31522 / CIP 106686 / LMG 19005 / NCIMB 14063 / MR-1</strain>
    </source>
</reference>